<feature type="chain" id="PRO_0000374048" description="Uncharacterized protein C1450.03">
    <location>
        <begin position="1"/>
        <end position="240"/>
    </location>
</feature>
<feature type="region of interest" description="Disordered" evidence="1">
    <location>
        <begin position="125"/>
        <end position="148"/>
    </location>
</feature>
<feature type="region of interest" description="Disordered" evidence="1">
    <location>
        <begin position="177"/>
        <end position="240"/>
    </location>
</feature>
<feature type="compositionally biased region" description="Acidic residues" evidence="1">
    <location>
        <begin position="130"/>
        <end position="148"/>
    </location>
</feature>
<feature type="compositionally biased region" description="Basic and acidic residues" evidence="1">
    <location>
        <begin position="192"/>
        <end position="203"/>
    </location>
</feature>
<feature type="compositionally biased region" description="Acidic residues" evidence="1">
    <location>
        <begin position="204"/>
        <end position="217"/>
    </location>
</feature>
<feature type="modified residue" description="Phosphoserine" evidence="3">
    <location>
        <position position="231"/>
    </location>
</feature>
<proteinExistence type="evidence at protein level"/>
<accession>Q9Y7N1</accession>
<evidence type="ECO:0000256" key="1">
    <source>
        <dbReference type="SAM" id="MobiDB-lite"/>
    </source>
</evidence>
<evidence type="ECO:0000269" key="2">
    <source>
    </source>
</evidence>
<evidence type="ECO:0000269" key="3">
    <source>
    </source>
</evidence>
<evidence type="ECO:0000305" key="4"/>
<name>YCK3_SCHPO</name>
<reference key="1">
    <citation type="journal article" date="2002" name="Nature">
        <title>The genome sequence of Schizosaccharomyces pombe.</title>
        <authorList>
            <person name="Wood V."/>
            <person name="Gwilliam R."/>
            <person name="Rajandream M.A."/>
            <person name="Lyne M.H."/>
            <person name="Lyne R."/>
            <person name="Stewart A."/>
            <person name="Sgouros J.G."/>
            <person name="Peat N."/>
            <person name="Hayles J."/>
            <person name="Baker S.G."/>
            <person name="Basham D."/>
            <person name="Bowman S."/>
            <person name="Brooks K."/>
            <person name="Brown D."/>
            <person name="Brown S."/>
            <person name="Chillingworth T."/>
            <person name="Churcher C.M."/>
            <person name="Collins M."/>
            <person name="Connor R."/>
            <person name="Cronin A."/>
            <person name="Davis P."/>
            <person name="Feltwell T."/>
            <person name="Fraser A."/>
            <person name="Gentles S."/>
            <person name="Goble A."/>
            <person name="Hamlin N."/>
            <person name="Harris D.E."/>
            <person name="Hidalgo J."/>
            <person name="Hodgson G."/>
            <person name="Holroyd S."/>
            <person name="Hornsby T."/>
            <person name="Howarth S."/>
            <person name="Huckle E.J."/>
            <person name="Hunt S."/>
            <person name="Jagels K."/>
            <person name="James K.D."/>
            <person name="Jones L."/>
            <person name="Jones M."/>
            <person name="Leather S."/>
            <person name="McDonald S."/>
            <person name="McLean J."/>
            <person name="Mooney P."/>
            <person name="Moule S."/>
            <person name="Mungall K.L."/>
            <person name="Murphy L.D."/>
            <person name="Niblett D."/>
            <person name="Odell C."/>
            <person name="Oliver K."/>
            <person name="O'Neil S."/>
            <person name="Pearson D."/>
            <person name="Quail M.A."/>
            <person name="Rabbinowitsch E."/>
            <person name="Rutherford K.M."/>
            <person name="Rutter S."/>
            <person name="Saunders D."/>
            <person name="Seeger K."/>
            <person name="Sharp S."/>
            <person name="Skelton J."/>
            <person name="Simmonds M.N."/>
            <person name="Squares R."/>
            <person name="Squares S."/>
            <person name="Stevens K."/>
            <person name="Taylor K."/>
            <person name="Taylor R.G."/>
            <person name="Tivey A."/>
            <person name="Walsh S.V."/>
            <person name="Warren T."/>
            <person name="Whitehead S."/>
            <person name="Woodward J.R."/>
            <person name="Volckaert G."/>
            <person name="Aert R."/>
            <person name="Robben J."/>
            <person name="Grymonprez B."/>
            <person name="Weltjens I."/>
            <person name="Vanstreels E."/>
            <person name="Rieger M."/>
            <person name="Schaefer M."/>
            <person name="Mueller-Auer S."/>
            <person name="Gabel C."/>
            <person name="Fuchs M."/>
            <person name="Duesterhoeft A."/>
            <person name="Fritzc C."/>
            <person name="Holzer E."/>
            <person name="Moestl D."/>
            <person name="Hilbert H."/>
            <person name="Borzym K."/>
            <person name="Langer I."/>
            <person name="Beck A."/>
            <person name="Lehrach H."/>
            <person name="Reinhardt R."/>
            <person name="Pohl T.M."/>
            <person name="Eger P."/>
            <person name="Zimmermann W."/>
            <person name="Wedler H."/>
            <person name="Wambutt R."/>
            <person name="Purnelle B."/>
            <person name="Goffeau A."/>
            <person name="Cadieu E."/>
            <person name="Dreano S."/>
            <person name="Gloux S."/>
            <person name="Lelaure V."/>
            <person name="Mottier S."/>
            <person name="Galibert F."/>
            <person name="Aves S.J."/>
            <person name="Xiang Z."/>
            <person name="Hunt C."/>
            <person name="Moore K."/>
            <person name="Hurst S.M."/>
            <person name="Lucas M."/>
            <person name="Rochet M."/>
            <person name="Gaillardin C."/>
            <person name="Tallada V.A."/>
            <person name="Garzon A."/>
            <person name="Thode G."/>
            <person name="Daga R.R."/>
            <person name="Cruzado L."/>
            <person name="Jimenez J."/>
            <person name="Sanchez M."/>
            <person name="del Rey F."/>
            <person name="Benito J."/>
            <person name="Dominguez A."/>
            <person name="Revuelta J.L."/>
            <person name="Moreno S."/>
            <person name="Armstrong J."/>
            <person name="Forsburg S.L."/>
            <person name="Cerutti L."/>
            <person name="Lowe T."/>
            <person name="McCombie W.R."/>
            <person name="Paulsen I."/>
            <person name="Potashkin J."/>
            <person name="Shpakovski G.V."/>
            <person name="Ussery D."/>
            <person name="Barrell B.G."/>
            <person name="Nurse P."/>
        </authorList>
    </citation>
    <scope>NUCLEOTIDE SEQUENCE [LARGE SCALE GENOMIC DNA]</scope>
    <source>
        <strain>972 / ATCC 24843</strain>
    </source>
</reference>
<reference key="2">
    <citation type="journal article" date="2006" name="Nat. Biotechnol.">
        <title>ORFeome cloning and global analysis of protein localization in the fission yeast Schizosaccharomyces pombe.</title>
        <authorList>
            <person name="Matsuyama A."/>
            <person name="Arai R."/>
            <person name="Yashiroda Y."/>
            <person name="Shirai A."/>
            <person name="Kamata A."/>
            <person name="Sekido S."/>
            <person name="Kobayashi Y."/>
            <person name="Hashimoto A."/>
            <person name="Hamamoto M."/>
            <person name="Hiraoka Y."/>
            <person name="Horinouchi S."/>
            <person name="Yoshida M."/>
        </authorList>
    </citation>
    <scope>SUBCELLULAR LOCATION [LARGE SCALE ANALYSIS]</scope>
</reference>
<reference key="3">
    <citation type="journal article" date="2008" name="J. Proteome Res.">
        <title>Phosphoproteome analysis of fission yeast.</title>
        <authorList>
            <person name="Wilson-Grady J.T."/>
            <person name="Villen J."/>
            <person name="Gygi S.P."/>
        </authorList>
    </citation>
    <scope>PHOSPHORYLATION [LARGE SCALE ANALYSIS] AT SER-231</scope>
    <scope>IDENTIFICATION BY MASS SPECTROMETRY</scope>
</reference>
<keyword id="KW-0963">Cytoplasm</keyword>
<keyword id="KW-0539">Nucleus</keyword>
<keyword id="KW-0597">Phosphoprotein</keyword>
<keyword id="KW-1185">Reference proteome</keyword>
<protein>
    <recommendedName>
        <fullName>Uncharacterized protein C1450.03</fullName>
    </recommendedName>
</protein>
<comment type="subcellular location">
    <subcellularLocation>
        <location evidence="2">Cytoplasm</location>
    </subcellularLocation>
    <subcellularLocation>
        <location evidence="2">Nucleus</location>
    </subcellularLocation>
</comment>
<comment type="similarity">
    <text evidence="4">Belongs to the UTP5 family.</text>
</comment>
<comment type="caution">
    <text evidence="4">Compared to other members of the family, it is shorter and lacks the WD repeats at the N-terminus.</text>
</comment>
<dbReference type="EMBL" id="CU329672">
    <property type="protein sequence ID" value="CAB40170.1"/>
    <property type="molecule type" value="Genomic_DNA"/>
</dbReference>
<dbReference type="PIR" id="T40985">
    <property type="entry name" value="T40985"/>
</dbReference>
<dbReference type="SMR" id="Q9Y7N1"/>
<dbReference type="BioGRID" id="275882">
    <property type="interactions" value="3"/>
</dbReference>
<dbReference type="FunCoup" id="Q9Y7N1">
    <property type="interactions" value="144"/>
</dbReference>
<dbReference type="STRING" id="284812.Q9Y7N1"/>
<dbReference type="iPTMnet" id="Q9Y7N1"/>
<dbReference type="PaxDb" id="4896-SPCC1450.03.1"/>
<dbReference type="EnsemblFungi" id="SPCC1450.03.1">
    <property type="protein sequence ID" value="SPCC1450.03.1:pep"/>
    <property type="gene ID" value="SPCC1450.03"/>
</dbReference>
<dbReference type="KEGG" id="spo:2539316"/>
<dbReference type="PomBase" id="SPCC1450.03"/>
<dbReference type="VEuPathDB" id="FungiDB:SPCC1450.03"/>
<dbReference type="eggNOG" id="KOG4547">
    <property type="taxonomic scope" value="Eukaryota"/>
</dbReference>
<dbReference type="HOGENOM" id="CLU_1156959_0_0_1"/>
<dbReference type="InParanoid" id="Q9Y7N1"/>
<dbReference type="OMA" id="HWIIVTH"/>
<dbReference type="PhylomeDB" id="Q9Y7N1"/>
<dbReference type="PRO" id="PR:Q9Y7N1"/>
<dbReference type="Proteomes" id="UP000002485">
    <property type="component" value="Chromosome III"/>
</dbReference>
<dbReference type="GO" id="GO:0005829">
    <property type="term" value="C:cytosol"/>
    <property type="evidence" value="ECO:0007005"/>
    <property type="project" value="PomBase"/>
</dbReference>
<dbReference type="GO" id="GO:0005730">
    <property type="term" value="C:nucleolus"/>
    <property type="evidence" value="ECO:0000318"/>
    <property type="project" value="GO_Central"/>
</dbReference>
<dbReference type="GO" id="GO:0005634">
    <property type="term" value="C:nucleus"/>
    <property type="evidence" value="ECO:0007005"/>
    <property type="project" value="PomBase"/>
</dbReference>
<dbReference type="GO" id="GO:0000462">
    <property type="term" value="P:maturation of SSU-rRNA from tricistronic rRNA transcript (SSU-rRNA, 5.8S rRNA, LSU-rRNA)"/>
    <property type="evidence" value="ECO:0000318"/>
    <property type="project" value="GO_Central"/>
</dbReference>
<dbReference type="InterPro" id="IPR007148">
    <property type="entry name" value="SSU_processome_Utp12"/>
</dbReference>
<dbReference type="InterPro" id="IPR052414">
    <property type="entry name" value="U3_snoRNA-assoc_WDR"/>
</dbReference>
<dbReference type="PANTHER" id="PTHR44267">
    <property type="entry name" value="WD REPEAT-CONTAINING PROTEIN 43"/>
    <property type="match status" value="1"/>
</dbReference>
<dbReference type="PANTHER" id="PTHR44267:SF1">
    <property type="entry name" value="WD REPEAT-CONTAINING PROTEIN 43"/>
    <property type="match status" value="1"/>
</dbReference>
<dbReference type="Pfam" id="PF04003">
    <property type="entry name" value="Utp12"/>
    <property type="match status" value="1"/>
</dbReference>
<organism>
    <name type="scientific">Schizosaccharomyces pombe (strain 972 / ATCC 24843)</name>
    <name type="common">Fission yeast</name>
    <dbReference type="NCBI Taxonomy" id="284812"/>
    <lineage>
        <taxon>Eukaryota</taxon>
        <taxon>Fungi</taxon>
        <taxon>Dikarya</taxon>
        <taxon>Ascomycota</taxon>
        <taxon>Taphrinomycotina</taxon>
        <taxon>Schizosaccharomycetes</taxon>
        <taxon>Schizosaccharomycetales</taxon>
        <taxon>Schizosaccharomycetaceae</taxon>
        <taxon>Schizosaccharomyces</taxon>
    </lineage>
</organism>
<sequence>MAATTGNIIKFEENADSKDLLEQCLNCSDVGVVSNTVRNMDGTIAADLARTLIPAMLINMQPSLAIWLHWIIVTHGGYLTTVMDLQDSLVQLHEKLVQSAHLMTKIFSLSGKLNMVLSQEEMRQRRLDFSSEDGEEEEENDYIDEDVDEAGYDIEVVDEAENDDMDNDLEANADAFDESNLEASLSPNAELSPRKSHIDHDFVIPEDEMLSEEEEQEVEKQILPKFVVPESPRKTSRKSR</sequence>
<gene>
    <name type="ORF">SPCC1450.03</name>
</gene>